<comment type="catalytic activity">
    <reaction evidence="1">
        <text>agmatine + H2O = N-carbamoylputrescine + NH4(+)</text>
        <dbReference type="Rhea" id="RHEA:18037"/>
        <dbReference type="ChEBI" id="CHEBI:15377"/>
        <dbReference type="ChEBI" id="CHEBI:28938"/>
        <dbReference type="ChEBI" id="CHEBI:58145"/>
        <dbReference type="ChEBI" id="CHEBI:58318"/>
        <dbReference type="EC" id="3.5.3.12"/>
    </reaction>
</comment>
<comment type="similarity">
    <text evidence="1">Belongs to the agmatine deiminase family.</text>
</comment>
<name>AGUA_STRP7</name>
<organism>
    <name type="scientific">Streptococcus pneumoniae (strain 70585)</name>
    <dbReference type="NCBI Taxonomy" id="488221"/>
    <lineage>
        <taxon>Bacteria</taxon>
        <taxon>Bacillati</taxon>
        <taxon>Bacillota</taxon>
        <taxon>Bacilli</taxon>
        <taxon>Lactobacillales</taxon>
        <taxon>Streptococcaceae</taxon>
        <taxon>Streptococcus</taxon>
    </lineage>
</organism>
<accession>C1C6Q3</accession>
<gene>
    <name evidence="1" type="primary">aguA</name>
    <name type="ordered locus">SP70585_0960</name>
</gene>
<dbReference type="EC" id="3.5.3.12" evidence="1"/>
<dbReference type="EMBL" id="CP000918">
    <property type="protein sequence ID" value="ACO16628.1"/>
    <property type="molecule type" value="Genomic_DNA"/>
</dbReference>
<dbReference type="RefSeq" id="WP_000969445.1">
    <property type="nucleotide sequence ID" value="NC_012468.1"/>
</dbReference>
<dbReference type="SMR" id="C1C6Q3"/>
<dbReference type="KEGG" id="snm:SP70585_0960"/>
<dbReference type="HOGENOM" id="CLU_037682_1_0_9"/>
<dbReference type="Proteomes" id="UP000002211">
    <property type="component" value="Chromosome"/>
</dbReference>
<dbReference type="GO" id="GO:0047632">
    <property type="term" value="F:agmatine deiminase activity"/>
    <property type="evidence" value="ECO:0007669"/>
    <property type="project" value="UniProtKB-UniRule"/>
</dbReference>
<dbReference type="GO" id="GO:0004668">
    <property type="term" value="F:protein-arginine deiminase activity"/>
    <property type="evidence" value="ECO:0007669"/>
    <property type="project" value="InterPro"/>
</dbReference>
<dbReference type="GO" id="GO:0009446">
    <property type="term" value="P:putrescine biosynthetic process"/>
    <property type="evidence" value="ECO:0007669"/>
    <property type="project" value="InterPro"/>
</dbReference>
<dbReference type="Gene3D" id="3.75.10.10">
    <property type="entry name" value="L-arginine/glycine Amidinotransferase, Chain A"/>
    <property type="match status" value="1"/>
</dbReference>
<dbReference type="HAMAP" id="MF_01841">
    <property type="entry name" value="Agmatine_deimin"/>
    <property type="match status" value="1"/>
</dbReference>
<dbReference type="InterPro" id="IPR017754">
    <property type="entry name" value="Agmatine_deiminase"/>
</dbReference>
<dbReference type="InterPro" id="IPR007466">
    <property type="entry name" value="Peptidyl-Arg-deiminase_porph"/>
</dbReference>
<dbReference type="NCBIfam" id="TIGR03380">
    <property type="entry name" value="agmatine_aguA"/>
    <property type="match status" value="1"/>
</dbReference>
<dbReference type="NCBIfam" id="NF010070">
    <property type="entry name" value="PRK13551.1"/>
    <property type="match status" value="1"/>
</dbReference>
<dbReference type="PANTHER" id="PTHR31377">
    <property type="entry name" value="AGMATINE DEIMINASE-RELATED"/>
    <property type="match status" value="1"/>
</dbReference>
<dbReference type="PANTHER" id="PTHR31377:SF0">
    <property type="entry name" value="AGMATINE DEIMINASE-RELATED"/>
    <property type="match status" value="1"/>
</dbReference>
<dbReference type="Pfam" id="PF04371">
    <property type="entry name" value="PAD_porph"/>
    <property type="match status" value="1"/>
</dbReference>
<dbReference type="SUPFAM" id="SSF55909">
    <property type="entry name" value="Pentein"/>
    <property type="match status" value="1"/>
</dbReference>
<keyword id="KW-0378">Hydrolase</keyword>
<protein>
    <recommendedName>
        <fullName evidence="1">Putative agmatine deiminase</fullName>
        <ecNumber evidence="1">3.5.3.12</ecNumber>
    </recommendedName>
    <alternativeName>
        <fullName evidence="1">Agmatine iminohydrolase</fullName>
    </alternativeName>
</protein>
<reference key="1">
    <citation type="journal article" date="2010" name="Genome Biol.">
        <title>Structure and dynamics of the pan-genome of Streptococcus pneumoniae and closely related species.</title>
        <authorList>
            <person name="Donati C."/>
            <person name="Hiller N.L."/>
            <person name="Tettelin H."/>
            <person name="Muzzi A."/>
            <person name="Croucher N.J."/>
            <person name="Angiuoli S.V."/>
            <person name="Oggioni M."/>
            <person name="Dunning Hotopp J.C."/>
            <person name="Hu F.Z."/>
            <person name="Riley D.R."/>
            <person name="Covacci A."/>
            <person name="Mitchell T.J."/>
            <person name="Bentley S.D."/>
            <person name="Kilian M."/>
            <person name="Ehrlich G.D."/>
            <person name="Rappuoli R."/>
            <person name="Moxon E.R."/>
            <person name="Masignani V."/>
        </authorList>
    </citation>
    <scope>NUCLEOTIDE SEQUENCE [LARGE SCALE GENOMIC DNA]</scope>
    <source>
        <strain>70585</strain>
    </source>
</reference>
<evidence type="ECO:0000255" key="1">
    <source>
        <dbReference type="HAMAP-Rule" id="MF_01841"/>
    </source>
</evidence>
<feature type="chain" id="PRO_1000188416" description="Putative agmatine deiminase">
    <location>
        <begin position="1"/>
        <end position="361"/>
    </location>
</feature>
<feature type="active site" description="Amidino-cysteine intermediate" evidence="1">
    <location>
        <position position="354"/>
    </location>
</feature>
<proteinExistence type="inferred from homology"/>
<sequence>MMDSPKKLGYHMPAEYEPHHGTLMIWPTRPGSWPFQGKAAKRAFTQIIETIAEGERVYLLVEQAYLSEAQSYLGDKVVYLDIPTNDAWARDTGPTILVNDKGKKLAVDWAFNAWGGTYDGLYQDYEEDDQVASRFAEALERPVYDAKPFVLEGGAIHSDGQGTILVTESCLLSPGRNPNLTKEEIENTLLESLGAEKVIWLPYGIYQDETNEHVDNVAAFVGPAELVLAWTDDENDPQYAMSKADLELLEQETDAKGCHFTIHKLPIPAVRQVVTEEDLPGYIYEEGEEKRYAGERLAASYVNFYIANKAVLVPQFEDVNDQVALDILSKCFPDRKVVGIPARDILLGGGNIHCITQQIPE</sequence>